<accession>Q0T7A9</accession>
<comment type="function">
    <text evidence="2">Displays esterase activity towards short chain fatty esters (acyl chain length of up to 8 carbons). Able to hydrolyze triacetylglycerol (triacetin) and tributyrylglycerol (tributyrin), but not trioleylglycerol (triolein) or cholesterol oleate. Negatively regulates MalT activity by antagonizing maltotriose binding. Inhibits MelA galactosidase activity.</text>
</comment>
<comment type="subunit">
    <text evidence="2">Homodimer. Interacts with MalT and MelA.</text>
</comment>
<comment type="subcellular location">
    <subcellularLocation>
        <location evidence="2">Cytoplasm</location>
    </subcellularLocation>
</comment>
<comment type="similarity">
    <text evidence="2">Belongs to the 'GDXG' lipolytic enzyme family.</text>
</comment>
<reference key="1">
    <citation type="journal article" date="2006" name="BMC Genomics">
        <title>Complete genome sequence of Shigella flexneri 5b and comparison with Shigella flexneri 2a.</title>
        <authorList>
            <person name="Nie H."/>
            <person name="Yang F."/>
            <person name="Zhang X."/>
            <person name="Yang J."/>
            <person name="Chen L."/>
            <person name="Wang J."/>
            <person name="Xiong Z."/>
            <person name="Peng J."/>
            <person name="Sun L."/>
            <person name="Dong J."/>
            <person name="Xue Y."/>
            <person name="Xu X."/>
            <person name="Chen S."/>
            <person name="Yao Z."/>
            <person name="Shen Y."/>
            <person name="Jin Q."/>
        </authorList>
    </citation>
    <scope>NUCLEOTIDE SEQUENCE [LARGE SCALE GENOMIC DNA]</scope>
    <source>
        <strain>8401</strain>
    </source>
</reference>
<protein>
    <recommendedName>
        <fullName evidence="2">Acetyl esterase</fullName>
        <ecNumber evidence="2">3.1.1.-</ecNumber>
    </recommendedName>
</protein>
<keyword id="KW-0963">Cytoplasm</keyword>
<keyword id="KW-0378">Hydrolase</keyword>
<keyword id="KW-0719">Serine esterase</keyword>
<name>AES_SHIF8</name>
<proteinExistence type="inferred from homology"/>
<organism>
    <name type="scientific">Shigella flexneri serotype 5b (strain 8401)</name>
    <dbReference type="NCBI Taxonomy" id="373384"/>
    <lineage>
        <taxon>Bacteria</taxon>
        <taxon>Pseudomonadati</taxon>
        <taxon>Pseudomonadota</taxon>
        <taxon>Gammaproteobacteria</taxon>
        <taxon>Enterobacterales</taxon>
        <taxon>Enterobacteriaceae</taxon>
        <taxon>Shigella</taxon>
    </lineage>
</organism>
<sequence length="319" mass="36009">MKPENKLPVLDLISAEMKTVVNTLQPDLPSWPATGTIAEQRQYYTLERRFWNAGAPEMATRAYMVPTKYGQVETRLFCPQPDSPATLFYLHGGGFILGNLDTHDRIMRLLASYSQCTVIGINYTLSPEARFPQAIEEIVAACCYFHQQAEDYQINMSRIGFAGDSAGAMLALASALWLRDKQIDCGKIAGVLLWYGLYGLRDSVTRRLLGGAWDGLTQQDLQMYEEAYLSNDADRESPYYCLFNNDLTREVPPCFIAGAEFDPLLDDSRLLYQTLAAHQQPCEFKLYPGTLHAFLHYSRMMKTADEALRDGAQFFTAQL</sequence>
<evidence type="ECO:0000250" key="1">
    <source>
        <dbReference type="UniProtKB" id="Q5NUF3"/>
    </source>
</evidence>
<evidence type="ECO:0000255" key="2">
    <source>
        <dbReference type="HAMAP-Rule" id="MF_01958"/>
    </source>
</evidence>
<feature type="chain" id="PRO_1000070798" description="Acetyl esterase">
    <location>
        <begin position="1"/>
        <end position="319"/>
    </location>
</feature>
<feature type="short sequence motif" description="Involved in the stabilization of the negatively charged intermediate by the formation of the oxyanion hole" evidence="1">
    <location>
        <begin position="91"/>
        <end position="93"/>
    </location>
</feature>
<feature type="active site" evidence="2">
    <location>
        <position position="165"/>
    </location>
</feature>
<feature type="active site" evidence="2">
    <location>
        <position position="262"/>
    </location>
</feature>
<feature type="active site" evidence="2">
    <location>
        <position position="292"/>
    </location>
</feature>
<dbReference type="EC" id="3.1.1.-" evidence="2"/>
<dbReference type="EMBL" id="CP000266">
    <property type="protein sequence ID" value="ABF02717.1"/>
    <property type="molecule type" value="Genomic_DNA"/>
</dbReference>
<dbReference type="RefSeq" id="WP_000801839.1">
    <property type="nucleotide sequence ID" value="NC_008258.1"/>
</dbReference>
<dbReference type="SMR" id="Q0T7A9"/>
<dbReference type="ESTHER" id="shifl-AES">
    <property type="family name" value="Acetyl_esterase"/>
</dbReference>
<dbReference type="KEGG" id="sfv:SFV_0449"/>
<dbReference type="HOGENOM" id="CLU_012494_6_4_6"/>
<dbReference type="Proteomes" id="UP000000659">
    <property type="component" value="Chromosome"/>
</dbReference>
<dbReference type="GO" id="GO:0005737">
    <property type="term" value="C:cytoplasm"/>
    <property type="evidence" value="ECO:0007669"/>
    <property type="project" value="UniProtKB-SubCell"/>
</dbReference>
<dbReference type="GO" id="GO:0052689">
    <property type="term" value="F:carboxylic ester hydrolase activity"/>
    <property type="evidence" value="ECO:0007669"/>
    <property type="project" value="UniProtKB-UniRule"/>
</dbReference>
<dbReference type="FunFam" id="3.40.50.1820:FF:000035">
    <property type="entry name" value="Acetyl esterase"/>
    <property type="match status" value="1"/>
</dbReference>
<dbReference type="Gene3D" id="3.40.50.1820">
    <property type="entry name" value="alpha/beta hydrolase"/>
    <property type="match status" value="1"/>
</dbReference>
<dbReference type="HAMAP" id="MF_01958">
    <property type="entry name" value="Acetyl_esterase"/>
    <property type="match status" value="1"/>
</dbReference>
<dbReference type="InterPro" id="IPR013094">
    <property type="entry name" value="AB_hydrolase_3"/>
</dbReference>
<dbReference type="InterPro" id="IPR029058">
    <property type="entry name" value="AB_hydrolase_fold"/>
</dbReference>
<dbReference type="InterPro" id="IPR023508">
    <property type="entry name" value="Acetyl_esterase"/>
</dbReference>
<dbReference type="InterPro" id="IPR050300">
    <property type="entry name" value="GDXG_lipolytic_enzyme"/>
</dbReference>
<dbReference type="InterPro" id="IPR002168">
    <property type="entry name" value="Lipase_GDXG_HIS_AS"/>
</dbReference>
<dbReference type="InterPro" id="IPR033140">
    <property type="entry name" value="Lipase_GDXG_put_SER_AS"/>
</dbReference>
<dbReference type="NCBIfam" id="NF007547">
    <property type="entry name" value="PRK10162.1"/>
    <property type="match status" value="1"/>
</dbReference>
<dbReference type="PANTHER" id="PTHR48081">
    <property type="entry name" value="AB HYDROLASE SUPERFAMILY PROTEIN C4A8.06C"/>
    <property type="match status" value="1"/>
</dbReference>
<dbReference type="PANTHER" id="PTHR48081:SF8">
    <property type="entry name" value="ALPHA_BETA HYDROLASE FOLD-3 DOMAIN-CONTAINING PROTEIN-RELATED"/>
    <property type="match status" value="1"/>
</dbReference>
<dbReference type="Pfam" id="PF07859">
    <property type="entry name" value="Abhydrolase_3"/>
    <property type="match status" value="1"/>
</dbReference>
<dbReference type="SUPFAM" id="SSF53474">
    <property type="entry name" value="alpha/beta-Hydrolases"/>
    <property type="match status" value="1"/>
</dbReference>
<dbReference type="PROSITE" id="PS01173">
    <property type="entry name" value="LIPASE_GDXG_HIS"/>
    <property type="match status" value="1"/>
</dbReference>
<dbReference type="PROSITE" id="PS01174">
    <property type="entry name" value="LIPASE_GDXG_SER"/>
    <property type="match status" value="1"/>
</dbReference>
<gene>
    <name evidence="2" type="primary">aes</name>
    <name type="ordered locus">SFV_0449</name>
</gene>